<gene>
    <name evidence="1" type="primary">aroA</name>
    <name type="ordered locus">BF0666</name>
</gene>
<protein>
    <recommendedName>
        <fullName evidence="1">3-phosphoshikimate 1-carboxyvinyltransferase</fullName>
        <ecNumber evidence="1">2.5.1.19</ecNumber>
    </recommendedName>
    <alternativeName>
        <fullName evidence="1">5-enolpyruvylshikimate-3-phosphate synthase</fullName>
        <shortName evidence="1">EPSP synthase</shortName>
        <shortName evidence="1">EPSPS</shortName>
    </alternativeName>
</protein>
<accession>Q5LHG9</accession>
<dbReference type="EC" id="2.5.1.19" evidence="1"/>
<dbReference type="EMBL" id="CR626927">
    <property type="protein sequence ID" value="CAH06411.1"/>
    <property type="molecule type" value="Genomic_DNA"/>
</dbReference>
<dbReference type="RefSeq" id="WP_010992133.1">
    <property type="nucleotide sequence ID" value="NC_003228.3"/>
</dbReference>
<dbReference type="SMR" id="Q5LHG9"/>
<dbReference type="PaxDb" id="272559-BF9343_0632"/>
<dbReference type="GeneID" id="60368429"/>
<dbReference type="KEGG" id="bfs:BF9343_0632"/>
<dbReference type="eggNOG" id="COG0128">
    <property type="taxonomic scope" value="Bacteria"/>
</dbReference>
<dbReference type="HOGENOM" id="CLU_024321_0_0_10"/>
<dbReference type="UniPathway" id="UPA00053">
    <property type="reaction ID" value="UER00089"/>
</dbReference>
<dbReference type="Proteomes" id="UP000006731">
    <property type="component" value="Chromosome"/>
</dbReference>
<dbReference type="GO" id="GO:0005737">
    <property type="term" value="C:cytoplasm"/>
    <property type="evidence" value="ECO:0007669"/>
    <property type="project" value="UniProtKB-SubCell"/>
</dbReference>
<dbReference type="GO" id="GO:0003866">
    <property type="term" value="F:3-phosphoshikimate 1-carboxyvinyltransferase activity"/>
    <property type="evidence" value="ECO:0007669"/>
    <property type="project" value="UniProtKB-UniRule"/>
</dbReference>
<dbReference type="GO" id="GO:0008652">
    <property type="term" value="P:amino acid biosynthetic process"/>
    <property type="evidence" value="ECO:0007669"/>
    <property type="project" value="UniProtKB-KW"/>
</dbReference>
<dbReference type="GO" id="GO:0009073">
    <property type="term" value="P:aromatic amino acid family biosynthetic process"/>
    <property type="evidence" value="ECO:0007669"/>
    <property type="project" value="UniProtKB-KW"/>
</dbReference>
<dbReference type="GO" id="GO:0009423">
    <property type="term" value="P:chorismate biosynthetic process"/>
    <property type="evidence" value="ECO:0007669"/>
    <property type="project" value="UniProtKB-UniRule"/>
</dbReference>
<dbReference type="CDD" id="cd01556">
    <property type="entry name" value="EPSP_synthase"/>
    <property type="match status" value="1"/>
</dbReference>
<dbReference type="Gene3D" id="3.65.10.10">
    <property type="entry name" value="Enolpyruvate transferase domain"/>
    <property type="match status" value="3"/>
</dbReference>
<dbReference type="HAMAP" id="MF_00210">
    <property type="entry name" value="EPSP_synth"/>
    <property type="match status" value="1"/>
</dbReference>
<dbReference type="InterPro" id="IPR001986">
    <property type="entry name" value="Enolpyruvate_Tfrase_dom"/>
</dbReference>
<dbReference type="InterPro" id="IPR036968">
    <property type="entry name" value="Enolpyruvate_Tfrase_sf"/>
</dbReference>
<dbReference type="InterPro" id="IPR006264">
    <property type="entry name" value="EPSP_synthase"/>
</dbReference>
<dbReference type="InterPro" id="IPR023193">
    <property type="entry name" value="EPSP_synthase_CS"/>
</dbReference>
<dbReference type="InterPro" id="IPR013792">
    <property type="entry name" value="RNA3'P_cycl/enolpyr_Trfase_a/b"/>
</dbReference>
<dbReference type="NCBIfam" id="TIGR01356">
    <property type="entry name" value="aroA"/>
    <property type="match status" value="1"/>
</dbReference>
<dbReference type="PANTHER" id="PTHR21090">
    <property type="entry name" value="AROM/DEHYDROQUINATE SYNTHASE"/>
    <property type="match status" value="1"/>
</dbReference>
<dbReference type="PANTHER" id="PTHR21090:SF5">
    <property type="entry name" value="PENTAFUNCTIONAL AROM POLYPEPTIDE"/>
    <property type="match status" value="1"/>
</dbReference>
<dbReference type="Pfam" id="PF00275">
    <property type="entry name" value="EPSP_synthase"/>
    <property type="match status" value="2"/>
</dbReference>
<dbReference type="PIRSF" id="PIRSF000505">
    <property type="entry name" value="EPSPS"/>
    <property type="match status" value="1"/>
</dbReference>
<dbReference type="SUPFAM" id="SSF55205">
    <property type="entry name" value="EPT/RTPC-like"/>
    <property type="match status" value="1"/>
</dbReference>
<dbReference type="PROSITE" id="PS00885">
    <property type="entry name" value="EPSP_SYNTHASE_2"/>
    <property type="match status" value="1"/>
</dbReference>
<keyword id="KW-0028">Amino-acid biosynthesis</keyword>
<keyword id="KW-0057">Aromatic amino acid biosynthesis</keyword>
<keyword id="KW-0963">Cytoplasm</keyword>
<keyword id="KW-0808">Transferase</keyword>
<feature type="chain" id="PRO_1000099665" description="3-phosphoshikimate 1-carboxyvinyltransferase">
    <location>
        <begin position="1"/>
        <end position="410"/>
    </location>
</feature>
<feature type="active site" description="Proton acceptor" evidence="1">
    <location>
        <position position="288"/>
    </location>
</feature>
<feature type="binding site" evidence="1">
    <location>
        <position position="21"/>
    </location>
    <ligand>
        <name>3-phosphoshikimate</name>
        <dbReference type="ChEBI" id="CHEBI:145989"/>
    </ligand>
</feature>
<feature type="binding site" evidence="1">
    <location>
        <position position="21"/>
    </location>
    <ligand>
        <name>phosphoenolpyruvate</name>
        <dbReference type="ChEBI" id="CHEBI:58702"/>
    </ligand>
</feature>
<feature type="binding site" evidence="1">
    <location>
        <position position="22"/>
    </location>
    <ligand>
        <name>3-phosphoshikimate</name>
        <dbReference type="ChEBI" id="CHEBI:145989"/>
    </ligand>
</feature>
<feature type="binding site" evidence="1">
    <location>
        <position position="26"/>
    </location>
    <ligand>
        <name>3-phosphoshikimate</name>
        <dbReference type="ChEBI" id="CHEBI:145989"/>
    </ligand>
</feature>
<feature type="binding site" evidence="1">
    <location>
        <position position="69"/>
    </location>
    <ligand>
        <name>phosphoenolpyruvate</name>
        <dbReference type="ChEBI" id="CHEBI:58702"/>
    </ligand>
</feature>
<feature type="binding site" evidence="1">
    <location>
        <position position="97"/>
    </location>
    <ligand>
        <name>phosphoenolpyruvate</name>
        <dbReference type="ChEBI" id="CHEBI:58702"/>
    </ligand>
</feature>
<feature type="binding site" evidence="1">
    <location>
        <position position="143"/>
    </location>
    <ligand>
        <name>3-phosphoshikimate</name>
        <dbReference type="ChEBI" id="CHEBI:145989"/>
    </ligand>
</feature>
<feature type="binding site" evidence="1">
    <location>
        <position position="144"/>
    </location>
    <ligand>
        <name>3-phosphoshikimate</name>
        <dbReference type="ChEBI" id="CHEBI:145989"/>
    </ligand>
</feature>
<feature type="binding site" evidence="1">
    <location>
        <position position="145"/>
    </location>
    <ligand>
        <name>3-phosphoshikimate</name>
        <dbReference type="ChEBI" id="CHEBI:145989"/>
    </ligand>
</feature>
<feature type="binding site" evidence="1">
    <location>
        <position position="145"/>
    </location>
    <ligand>
        <name>phosphoenolpyruvate</name>
        <dbReference type="ChEBI" id="CHEBI:58702"/>
    </ligand>
</feature>
<feature type="binding site" evidence="1">
    <location>
        <position position="171"/>
    </location>
    <ligand>
        <name>3-phosphoshikimate</name>
        <dbReference type="ChEBI" id="CHEBI:145989"/>
    </ligand>
</feature>
<feature type="binding site" evidence="1">
    <location>
        <position position="288"/>
    </location>
    <ligand>
        <name>3-phosphoshikimate</name>
        <dbReference type="ChEBI" id="CHEBI:145989"/>
    </ligand>
</feature>
<feature type="binding site" evidence="1">
    <location>
        <position position="315"/>
    </location>
    <ligand>
        <name>3-phosphoshikimate</name>
        <dbReference type="ChEBI" id="CHEBI:145989"/>
    </ligand>
</feature>
<feature type="binding site" evidence="1">
    <location>
        <position position="319"/>
    </location>
    <ligand>
        <name>phosphoenolpyruvate</name>
        <dbReference type="ChEBI" id="CHEBI:58702"/>
    </ligand>
</feature>
<feature type="binding site" evidence="1">
    <location>
        <position position="364"/>
    </location>
    <ligand>
        <name>phosphoenolpyruvate</name>
        <dbReference type="ChEBI" id="CHEBI:58702"/>
    </ligand>
</feature>
<feature type="binding site" evidence="1">
    <location>
        <position position="389"/>
    </location>
    <ligand>
        <name>phosphoenolpyruvate</name>
        <dbReference type="ChEBI" id="CHEBI:58702"/>
    </ligand>
</feature>
<organism>
    <name type="scientific">Bacteroides fragilis (strain ATCC 25285 / DSM 2151 / CCUG 4856 / JCM 11019 / LMG 10263 / NCTC 9343 / Onslow / VPI 2553 / EN-2)</name>
    <dbReference type="NCBI Taxonomy" id="272559"/>
    <lineage>
        <taxon>Bacteria</taxon>
        <taxon>Pseudomonadati</taxon>
        <taxon>Bacteroidota</taxon>
        <taxon>Bacteroidia</taxon>
        <taxon>Bacteroidales</taxon>
        <taxon>Bacteroidaceae</taxon>
        <taxon>Bacteroides</taxon>
    </lineage>
</organism>
<proteinExistence type="inferred from homology"/>
<sequence>MRYLLSAPSQIKATIQLPASKSISNRALIIHALSKGDDVPSNLSDCDDTQVMIKALTEGNEVIDILAAGTAMRFLTAYLSSTPGIHTITGTERMQQRPIQILVNALRELGAHIEYVRNEGFPPLRIEGRELTGSEITLKGNVSSQYISALLMIGPVLKNGLQLRLTGEIVSRPYINLTLQLMKDFGASASWTSDQNIQVDPQPYHCLPFTVESDWSAASYWYQIAALSPQADIELTGLFRHSYQGDSRGAEVFARLGVATEYTETGIRLKKNGTCVERLDEDFVDIPDLAQTFVVTCALLNVPFRFTGLQSLKIKETDRIEALKTEMKKLGYILHDKNDSILSWDGERVEQQTCPVIKTYEDHRMAMAFAPAAIHYPTIQIDEPQVVSKSYPGYWDDLRKAGFGIKVGEE</sequence>
<evidence type="ECO:0000255" key="1">
    <source>
        <dbReference type="HAMAP-Rule" id="MF_00210"/>
    </source>
</evidence>
<name>AROA_BACFN</name>
<comment type="function">
    <text evidence="1">Catalyzes the transfer of the enolpyruvyl moiety of phosphoenolpyruvate (PEP) to the 5-hydroxyl of shikimate-3-phosphate (S3P) to produce enolpyruvyl shikimate-3-phosphate and inorganic phosphate.</text>
</comment>
<comment type="catalytic activity">
    <reaction evidence="1">
        <text>3-phosphoshikimate + phosphoenolpyruvate = 5-O-(1-carboxyvinyl)-3-phosphoshikimate + phosphate</text>
        <dbReference type="Rhea" id="RHEA:21256"/>
        <dbReference type="ChEBI" id="CHEBI:43474"/>
        <dbReference type="ChEBI" id="CHEBI:57701"/>
        <dbReference type="ChEBI" id="CHEBI:58702"/>
        <dbReference type="ChEBI" id="CHEBI:145989"/>
        <dbReference type="EC" id="2.5.1.19"/>
    </reaction>
    <physiologicalReaction direction="left-to-right" evidence="1">
        <dbReference type="Rhea" id="RHEA:21257"/>
    </physiologicalReaction>
</comment>
<comment type="pathway">
    <text evidence="1">Metabolic intermediate biosynthesis; chorismate biosynthesis; chorismate from D-erythrose 4-phosphate and phosphoenolpyruvate: step 6/7.</text>
</comment>
<comment type="subunit">
    <text evidence="1">Monomer.</text>
</comment>
<comment type="subcellular location">
    <subcellularLocation>
        <location evidence="1">Cytoplasm</location>
    </subcellularLocation>
</comment>
<comment type="similarity">
    <text evidence="1">Belongs to the EPSP synthase family.</text>
</comment>
<reference key="1">
    <citation type="journal article" date="2005" name="Science">
        <title>Extensive DNA inversions in the B. fragilis genome control variable gene expression.</title>
        <authorList>
            <person name="Cerdeno-Tarraga A.-M."/>
            <person name="Patrick S."/>
            <person name="Crossman L.C."/>
            <person name="Blakely G."/>
            <person name="Abratt V."/>
            <person name="Lennard N."/>
            <person name="Poxton I."/>
            <person name="Duerden B."/>
            <person name="Harris B."/>
            <person name="Quail M.A."/>
            <person name="Barron A."/>
            <person name="Clark L."/>
            <person name="Corton C."/>
            <person name="Doggett J."/>
            <person name="Holden M.T.G."/>
            <person name="Larke N."/>
            <person name="Line A."/>
            <person name="Lord A."/>
            <person name="Norbertczak H."/>
            <person name="Ormond D."/>
            <person name="Price C."/>
            <person name="Rabbinowitsch E."/>
            <person name="Woodward J."/>
            <person name="Barrell B.G."/>
            <person name="Parkhill J."/>
        </authorList>
    </citation>
    <scope>NUCLEOTIDE SEQUENCE [LARGE SCALE GENOMIC DNA]</scope>
    <source>
        <strain>ATCC 25285 / DSM 2151 / CCUG 4856 / JCM 11019 / LMG 10263 / NCTC 9343 / Onslow / VPI 2553 / EN-2</strain>
    </source>
</reference>